<name>SEC23_PICGU</name>
<accession>A5DA00</accession>
<organism>
    <name type="scientific">Meyerozyma guilliermondii (strain ATCC 6260 / CBS 566 / DSM 6381 / JCM 1539 / NBRC 10279 / NRRL Y-324)</name>
    <name type="common">Yeast</name>
    <name type="synonym">Candida guilliermondii</name>
    <dbReference type="NCBI Taxonomy" id="294746"/>
    <lineage>
        <taxon>Eukaryota</taxon>
        <taxon>Fungi</taxon>
        <taxon>Dikarya</taxon>
        <taxon>Ascomycota</taxon>
        <taxon>Saccharomycotina</taxon>
        <taxon>Pichiomycetes</taxon>
        <taxon>Debaryomycetaceae</taxon>
        <taxon>Meyerozyma</taxon>
    </lineage>
</organism>
<gene>
    <name type="primary">SEC23</name>
    <name type="ORF">PGUG_00105</name>
</gene>
<feature type="chain" id="PRO_0000295469" description="Protein transport protein SEC23">
    <location>
        <begin position="1"/>
        <end position="748"/>
    </location>
</feature>
<feature type="binding site" evidence="1">
    <location>
        <position position="56"/>
    </location>
    <ligand>
        <name>Zn(2+)</name>
        <dbReference type="ChEBI" id="CHEBI:29105"/>
    </ligand>
</feature>
<feature type="binding site" evidence="1">
    <location>
        <position position="61"/>
    </location>
    <ligand>
        <name>Zn(2+)</name>
        <dbReference type="ChEBI" id="CHEBI:29105"/>
    </ligand>
</feature>
<feature type="binding site" evidence="1">
    <location>
        <position position="79"/>
    </location>
    <ligand>
        <name>Zn(2+)</name>
        <dbReference type="ChEBI" id="CHEBI:29105"/>
    </ligand>
</feature>
<feature type="binding site" evidence="1">
    <location>
        <position position="82"/>
    </location>
    <ligand>
        <name>Zn(2+)</name>
        <dbReference type="ChEBI" id="CHEBI:29105"/>
    </ligand>
</feature>
<proteinExistence type="inferred from homology"/>
<keyword id="KW-0963">Cytoplasm</keyword>
<keyword id="KW-0968">Cytoplasmic vesicle</keyword>
<keyword id="KW-0256">Endoplasmic reticulum</keyword>
<keyword id="KW-0931">ER-Golgi transport</keyword>
<keyword id="KW-0333">Golgi apparatus</keyword>
<keyword id="KW-0472">Membrane</keyword>
<keyword id="KW-0479">Metal-binding</keyword>
<keyword id="KW-0653">Protein transport</keyword>
<keyword id="KW-1185">Reference proteome</keyword>
<keyword id="KW-0813">Transport</keyword>
<keyword id="KW-0862">Zinc</keyword>
<protein>
    <recommendedName>
        <fullName>Protein transport protein SEC23</fullName>
    </recommendedName>
</protein>
<evidence type="ECO:0000250" key="1"/>
<evidence type="ECO:0000305" key="2"/>
<comment type="function">
    <text evidence="1">Component of the coat protein complex II (COPII) which promotes the formation of transport vesicles from the endoplasmic reticulum (ER). The coat has two main functions, the physical deformation of the endoplasmic reticulum membrane into vesicles and the selection of cargo molecules (By similarity).</text>
</comment>
<comment type="subunit">
    <text evidence="1">The COPII coat is composed of at least 5 proteins: the SEC23/24 complex, the SEC13/31 complex, and the protein SAR1.</text>
</comment>
<comment type="subcellular location">
    <subcellularLocation>
        <location evidence="1">Cytoplasm</location>
    </subcellularLocation>
    <subcellularLocation>
        <location evidence="1">Cytoplasmic vesicle</location>
        <location evidence="1">COPII-coated vesicle membrane</location>
        <topology evidence="1">Peripheral membrane protein</topology>
        <orientation evidence="1">Cytoplasmic side</orientation>
    </subcellularLocation>
    <subcellularLocation>
        <location evidence="1">Endoplasmic reticulum membrane</location>
        <topology evidence="1">Peripheral membrane protein</topology>
        <orientation evidence="1">Cytoplasmic side</orientation>
    </subcellularLocation>
    <subcellularLocation>
        <location evidence="1">Golgi apparatus membrane</location>
        <topology evidence="1">Peripheral membrane protein</topology>
        <orientation evidence="1">Cytoplasmic side</orientation>
    </subcellularLocation>
</comment>
<comment type="similarity">
    <text evidence="2">Belongs to the SEC23/SEC24 family. SEC23 subfamily.</text>
</comment>
<comment type="sequence caution" evidence="2">
    <conflict type="erroneous initiation">
        <sequence resource="EMBL-CDS" id="EDK36007"/>
    </conflict>
</comment>
<reference key="1">
    <citation type="journal article" date="2009" name="Nature">
        <title>Evolution of pathogenicity and sexual reproduction in eight Candida genomes.</title>
        <authorList>
            <person name="Butler G."/>
            <person name="Rasmussen M.D."/>
            <person name="Lin M.F."/>
            <person name="Santos M.A.S."/>
            <person name="Sakthikumar S."/>
            <person name="Munro C.A."/>
            <person name="Rheinbay E."/>
            <person name="Grabherr M."/>
            <person name="Forche A."/>
            <person name="Reedy J.L."/>
            <person name="Agrafioti I."/>
            <person name="Arnaud M.B."/>
            <person name="Bates S."/>
            <person name="Brown A.J.P."/>
            <person name="Brunke S."/>
            <person name="Costanzo M.C."/>
            <person name="Fitzpatrick D.A."/>
            <person name="de Groot P.W.J."/>
            <person name="Harris D."/>
            <person name="Hoyer L.L."/>
            <person name="Hube B."/>
            <person name="Klis F.M."/>
            <person name="Kodira C."/>
            <person name="Lennard N."/>
            <person name="Logue M.E."/>
            <person name="Martin R."/>
            <person name="Neiman A.M."/>
            <person name="Nikolaou E."/>
            <person name="Quail M.A."/>
            <person name="Quinn J."/>
            <person name="Santos M.C."/>
            <person name="Schmitzberger F.F."/>
            <person name="Sherlock G."/>
            <person name="Shah P."/>
            <person name="Silverstein K.A.T."/>
            <person name="Skrzypek M.S."/>
            <person name="Soll D."/>
            <person name="Staggs R."/>
            <person name="Stansfield I."/>
            <person name="Stumpf M.P.H."/>
            <person name="Sudbery P.E."/>
            <person name="Srikantha T."/>
            <person name="Zeng Q."/>
            <person name="Berman J."/>
            <person name="Berriman M."/>
            <person name="Heitman J."/>
            <person name="Gow N.A.R."/>
            <person name="Lorenz M.C."/>
            <person name="Birren B.W."/>
            <person name="Kellis M."/>
            <person name="Cuomo C.A."/>
        </authorList>
    </citation>
    <scope>NUCLEOTIDE SEQUENCE [LARGE SCALE GENOMIC DNA]</scope>
    <source>
        <strain>ATCC 6260 / CBS 566 / DSM 6381 / JCM 1539 / NBRC 10279 / NRRL Y-324</strain>
    </source>
</reference>
<dbReference type="EMBL" id="CH408155">
    <property type="protein sequence ID" value="EDK36007.2"/>
    <property type="status" value="ALT_INIT"/>
    <property type="molecule type" value="Genomic_DNA"/>
</dbReference>
<dbReference type="RefSeq" id="XP_001486728.1">
    <property type="nucleotide sequence ID" value="XM_001486678.1"/>
</dbReference>
<dbReference type="SMR" id="A5DA00"/>
<dbReference type="FunCoup" id="A5DA00">
    <property type="interactions" value="1030"/>
</dbReference>
<dbReference type="STRING" id="294746.A5DA00"/>
<dbReference type="GeneID" id="5128860"/>
<dbReference type="KEGG" id="pgu:PGUG_00105"/>
<dbReference type="eggNOG" id="KOG1986">
    <property type="taxonomic scope" value="Eukaryota"/>
</dbReference>
<dbReference type="HOGENOM" id="CLU_008658_3_0_1"/>
<dbReference type="InParanoid" id="A5DA00"/>
<dbReference type="OrthoDB" id="10256289at2759"/>
<dbReference type="Proteomes" id="UP000001997">
    <property type="component" value="Unassembled WGS sequence"/>
</dbReference>
<dbReference type="GO" id="GO:0030127">
    <property type="term" value="C:COPII vesicle coat"/>
    <property type="evidence" value="ECO:0007669"/>
    <property type="project" value="InterPro"/>
</dbReference>
<dbReference type="GO" id="GO:0070971">
    <property type="term" value="C:endoplasmic reticulum exit site"/>
    <property type="evidence" value="ECO:0007669"/>
    <property type="project" value="TreeGrafter"/>
</dbReference>
<dbReference type="GO" id="GO:0005789">
    <property type="term" value="C:endoplasmic reticulum membrane"/>
    <property type="evidence" value="ECO:0007669"/>
    <property type="project" value="UniProtKB-SubCell"/>
</dbReference>
<dbReference type="GO" id="GO:0000139">
    <property type="term" value="C:Golgi membrane"/>
    <property type="evidence" value="ECO:0007669"/>
    <property type="project" value="UniProtKB-SubCell"/>
</dbReference>
<dbReference type="GO" id="GO:0005096">
    <property type="term" value="F:GTPase activator activity"/>
    <property type="evidence" value="ECO:0007669"/>
    <property type="project" value="TreeGrafter"/>
</dbReference>
<dbReference type="GO" id="GO:0008270">
    <property type="term" value="F:zinc ion binding"/>
    <property type="evidence" value="ECO:0007669"/>
    <property type="project" value="InterPro"/>
</dbReference>
<dbReference type="GO" id="GO:0090110">
    <property type="term" value="P:COPII-coated vesicle cargo loading"/>
    <property type="evidence" value="ECO:0007669"/>
    <property type="project" value="TreeGrafter"/>
</dbReference>
<dbReference type="GO" id="GO:0006886">
    <property type="term" value="P:intracellular protein transport"/>
    <property type="evidence" value="ECO:0007669"/>
    <property type="project" value="InterPro"/>
</dbReference>
<dbReference type="CDD" id="cd11287">
    <property type="entry name" value="Sec23_C"/>
    <property type="match status" value="1"/>
</dbReference>
<dbReference type="FunFam" id="1.20.120.730:FF:000005">
    <property type="entry name" value="Protein transport protein SEC23"/>
    <property type="match status" value="1"/>
</dbReference>
<dbReference type="FunFam" id="3.40.20.10:FF:000006">
    <property type="entry name" value="Protein transport protein SEC23"/>
    <property type="match status" value="1"/>
</dbReference>
<dbReference type="FunFam" id="3.40.50.410:FF:000008">
    <property type="entry name" value="Protein transport protein SEC23"/>
    <property type="match status" value="1"/>
</dbReference>
<dbReference type="Gene3D" id="2.60.40.1670">
    <property type="entry name" value="beta-sandwich domain of Sec23/24"/>
    <property type="match status" value="1"/>
</dbReference>
<dbReference type="Gene3D" id="1.20.120.730">
    <property type="entry name" value="Sec23/Sec24 helical domain"/>
    <property type="match status" value="1"/>
</dbReference>
<dbReference type="Gene3D" id="3.40.20.10">
    <property type="entry name" value="Severin"/>
    <property type="match status" value="1"/>
</dbReference>
<dbReference type="Gene3D" id="3.40.50.410">
    <property type="entry name" value="von Willebrand factor, type A domain"/>
    <property type="match status" value="1"/>
</dbReference>
<dbReference type="Gene3D" id="2.30.30.380">
    <property type="entry name" value="Zn-finger domain of Sec23/24"/>
    <property type="match status" value="1"/>
</dbReference>
<dbReference type="InterPro" id="IPR029006">
    <property type="entry name" value="ADF-H/Gelsolin-like_dom_sf"/>
</dbReference>
<dbReference type="InterPro" id="IPR007123">
    <property type="entry name" value="Gelsolin-like_dom"/>
</dbReference>
<dbReference type="InterPro" id="IPR036180">
    <property type="entry name" value="Gelsolin-like_dom_sf"/>
</dbReference>
<dbReference type="InterPro" id="IPR037364">
    <property type="entry name" value="Sec23"/>
</dbReference>
<dbReference type="InterPro" id="IPR006900">
    <property type="entry name" value="Sec23/24_helical_dom"/>
</dbReference>
<dbReference type="InterPro" id="IPR036175">
    <property type="entry name" value="Sec23/24_helical_dom_sf"/>
</dbReference>
<dbReference type="InterPro" id="IPR006896">
    <property type="entry name" value="Sec23/24_trunk_dom"/>
</dbReference>
<dbReference type="InterPro" id="IPR012990">
    <property type="entry name" value="Sec23_24_beta_S"/>
</dbReference>
<dbReference type="InterPro" id="IPR037550">
    <property type="entry name" value="Sec23_C"/>
</dbReference>
<dbReference type="InterPro" id="IPR036465">
    <property type="entry name" value="vWFA_dom_sf"/>
</dbReference>
<dbReference type="InterPro" id="IPR006895">
    <property type="entry name" value="Znf_Sec23_Sec24"/>
</dbReference>
<dbReference type="InterPro" id="IPR036174">
    <property type="entry name" value="Znf_Sec23_Sec24_sf"/>
</dbReference>
<dbReference type="PANTHER" id="PTHR11141">
    <property type="entry name" value="PROTEIN TRANSPORT PROTEIN SEC23"/>
    <property type="match status" value="1"/>
</dbReference>
<dbReference type="PANTHER" id="PTHR11141:SF0">
    <property type="entry name" value="PROTEIN TRANSPORT PROTEIN SEC23"/>
    <property type="match status" value="1"/>
</dbReference>
<dbReference type="Pfam" id="PF00626">
    <property type="entry name" value="Gelsolin"/>
    <property type="match status" value="1"/>
</dbReference>
<dbReference type="Pfam" id="PF08033">
    <property type="entry name" value="Sec23_BS"/>
    <property type="match status" value="1"/>
</dbReference>
<dbReference type="Pfam" id="PF04815">
    <property type="entry name" value="Sec23_helical"/>
    <property type="match status" value="1"/>
</dbReference>
<dbReference type="Pfam" id="PF04811">
    <property type="entry name" value="Sec23_trunk"/>
    <property type="match status" value="1"/>
</dbReference>
<dbReference type="Pfam" id="PF04810">
    <property type="entry name" value="zf-Sec23_Sec24"/>
    <property type="match status" value="1"/>
</dbReference>
<dbReference type="SUPFAM" id="SSF81995">
    <property type="entry name" value="beta-sandwich domain of Sec23/24"/>
    <property type="match status" value="1"/>
</dbReference>
<dbReference type="SUPFAM" id="SSF82754">
    <property type="entry name" value="C-terminal, gelsolin-like domain of Sec23/24"/>
    <property type="match status" value="1"/>
</dbReference>
<dbReference type="SUPFAM" id="SSF81811">
    <property type="entry name" value="Helical domain of Sec23/24"/>
    <property type="match status" value="1"/>
</dbReference>
<dbReference type="SUPFAM" id="SSF53300">
    <property type="entry name" value="vWA-like"/>
    <property type="match status" value="1"/>
</dbReference>
<dbReference type="SUPFAM" id="SSF82919">
    <property type="entry name" value="Zn-finger domain of Sec23/24"/>
    <property type="match status" value="1"/>
</dbReference>
<sequence length="748" mass="83723">MNFEEAEDINGVRFSWNTFPSTKVEAGKTVVPIGSLFTPLKFRQDLPVADYDPHFCLNQNCRSVLNPYCSVDPSGSWICPLCGTRCPLPPHYQGITQDNLPIELNPASSTIEYITARPVPNPPIFLFVIDTCQDDDTLQALKDTLIVSLSLFPPNALIGLITYGAMVQVHDLGSESIKKSYIFRGDRAYDEKQINDMLNKPVLTPQGTPQFANSLFRFLLPIEEVEYQLTDILENLTRDPWPVANGDRPLRSAGSALNIASNLLGLTYAGFGGRIMLFAAGPCTLNPGMIVGPKLKEPKRSHSDIDKDNAKHYKKAMKFYDGIAAKTVKNGHTIDIFAGCLDEIGMLEMKSLCHQTGGCMVYSDAFTTSIFKQSFLRLFNKDNDGYLLMGFNGTLDIKCSRELKVSGLIGHASSLHIKSPNVSENEVGVGGTSQYKLCSVTPQHTYAIFFDVANTSPLPPNAQSYIQFITHYQHASGTYRLRVTTVSNILTGDEQVLTQSFDQEAAAVLMSRITLFKSEQDDGADVLRWVDRMLIRLCQKFADYRKDLDETFRLGPQFSLFPQFIYYLRRSQFLQVFNNSPDETAFYRHVLMTEDCNNSLIMIQPTLTSFSLDSEPEPVLLDSVSIKDDRILLLDTFFHILIFHGKTIAEWRKAGYQDQEEYANLKQLLEEPKQEAAELLVDRFPLPRFIDTEEGGSQARFLYSKLNPSTTYNNQSAIGANGAVVLTDDVSLQVFMSHLQKLVVSGST</sequence>